<sequence length="274" mass="29880">MQQLQNVIETAFERRADITPVNVDTVTREAVNQVISLLDSGALRVAEKIDGQWVTHQWLKKAVLLSFRINDNQVIDGAESRYFDKVPMKFADYDEARFQKEGFRVVPPAAVRQGAFIARNTVLMPSYVNIGAYVDEGTMVDTWATVGSCAQIGKNVHLSGGVGIGGVLEPLQANPTIIEDNCFIGARSEVVEGVIVEEGSVISMGVYLGQSTKIYDRETGEVHYGRVPAGSVVVSGNLPSKDGKYSLYCAVIVKKVDAKTRGKVGINELLRTID</sequence>
<dbReference type="EC" id="2.3.1.117" evidence="1"/>
<dbReference type="EMBL" id="CP001138">
    <property type="protein sequence ID" value="ACH49348.1"/>
    <property type="molecule type" value="Genomic_DNA"/>
</dbReference>
<dbReference type="RefSeq" id="WP_001186676.1">
    <property type="nucleotide sequence ID" value="NC_011149.1"/>
</dbReference>
<dbReference type="SMR" id="B5F8S7"/>
<dbReference type="KEGG" id="sea:SeAg_B0252"/>
<dbReference type="HOGENOM" id="CLU_050859_0_1_6"/>
<dbReference type="UniPathway" id="UPA00034">
    <property type="reaction ID" value="UER00019"/>
</dbReference>
<dbReference type="Proteomes" id="UP000008819">
    <property type="component" value="Chromosome"/>
</dbReference>
<dbReference type="GO" id="GO:0005737">
    <property type="term" value="C:cytoplasm"/>
    <property type="evidence" value="ECO:0007669"/>
    <property type="project" value="UniProtKB-SubCell"/>
</dbReference>
<dbReference type="GO" id="GO:0008666">
    <property type="term" value="F:2,3,4,5-tetrahydropyridine-2,6-dicarboxylate N-succinyltransferase activity"/>
    <property type="evidence" value="ECO:0007669"/>
    <property type="project" value="UniProtKB-UniRule"/>
</dbReference>
<dbReference type="GO" id="GO:0016779">
    <property type="term" value="F:nucleotidyltransferase activity"/>
    <property type="evidence" value="ECO:0007669"/>
    <property type="project" value="TreeGrafter"/>
</dbReference>
<dbReference type="GO" id="GO:0019877">
    <property type="term" value="P:diaminopimelate biosynthetic process"/>
    <property type="evidence" value="ECO:0007669"/>
    <property type="project" value="UniProtKB-UniRule"/>
</dbReference>
<dbReference type="GO" id="GO:0009089">
    <property type="term" value="P:lysine biosynthetic process via diaminopimelate"/>
    <property type="evidence" value="ECO:0007669"/>
    <property type="project" value="UniProtKB-UniRule"/>
</dbReference>
<dbReference type="CDD" id="cd03350">
    <property type="entry name" value="LbH_THP_succinylT"/>
    <property type="match status" value="1"/>
</dbReference>
<dbReference type="FunFam" id="2.160.10.10:FF:000004">
    <property type="entry name" value="2,3,4,5-tetrahydropyridine-2,6-dicarboxylate N-succinyltransferase"/>
    <property type="match status" value="1"/>
</dbReference>
<dbReference type="Gene3D" id="2.160.10.10">
    <property type="entry name" value="Hexapeptide repeat proteins"/>
    <property type="match status" value="1"/>
</dbReference>
<dbReference type="Gene3D" id="1.10.166.10">
    <property type="entry name" value="Tetrahydrodipicolinate-N-succinyltransferase, N-terminal domain"/>
    <property type="match status" value="1"/>
</dbReference>
<dbReference type="HAMAP" id="MF_00811">
    <property type="entry name" value="DapD"/>
    <property type="match status" value="1"/>
</dbReference>
<dbReference type="InterPro" id="IPR005664">
    <property type="entry name" value="DapD_Trfase_Hexpep_rpt_fam"/>
</dbReference>
<dbReference type="InterPro" id="IPR001451">
    <property type="entry name" value="Hexapep"/>
</dbReference>
<dbReference type="InterPro" id="IPR018357">
    <property type="entry name" value="Hexapep_transf_CS"/>
</dbReference>
<dbReference type="InterPro" id="IPR023180">
    <property type="entry name" value="THP_succinylTrfase_dom1"/>
</dbReference>
<dbReference type="InterPro" id="IPR037133">
    <property type="entry name" value="THP_succinylTrfase_N_sf"/>
</dbReference>
<dbReference type="InterPro" id="IPR011004">
    <property type="entry name" value="Trimer_LpxA-like_sf"/>
</dbReference>
<dbReference type="NCBIfam" id="TIGR00965">
    <property type="entry name" value="dapD"/>
    <property type="match status" value="1"/>
</dbReference>
<dbReference type="NCBIfam" id="NF008808">
    <property type="entry name" value="PRK11830.1"/>
    <property type="match status" value="1"/>
</dbReference>
<dbReference type="PANTHER" id="PTHR19136:SF52">
    <property type="entry name" value="2,3,4,5-TETRAHYDROPYRIDINE-2,6-DICARBOXYLATE N-SUCCINYLTRANSFERASE"/>
    <property type="match status" value="1"/>
</dbReference>
<dbReference type="PANTHER" id="PTHR19136">
    <property type="entry name" value="MOLYBDENUM COFACTOR GUANYLYLTRANSFERASE"/>
    <property type="match status" value="1"/>
</dbReference>
<dbReference type="Pfam" id="PF14602">
    <property type="entry name" value="Hexapep_2"/>
    <property type="match status" value="1"/>
</dbReference>
<dbReference type="Pfam" id="PF14805">
    <property type="entry name" value="THDPS_N_2"/>
    <property type="match status" value="1"/>
</dbReference>
<dbReference type="SUPFAM" id="SSF51161">
    <property type="entry name" value="Trimeric LpxA-like enzymes"/>
    <property type="match status" value="1"/>
</dbReference>
<dbReference type="PROSITE" id="PS00101">
    <property type="entry name" value="HEXAPEP_TRANSFERASES"/>
    <property type="match status" value="1"/>
</dbReference>
<comment type="catalytic activity">
    <reaction evidence="1">
        <text>(S)-2,3,4,5-tetrahydrodipicolinate + succinyl-CoA + H2O = (S)-2-succinylamino-6-oxoheptanedioate + CoA</text>
        <dbReference type="Rhea" id="RHEA:17325"/>
        <dbReference type="ChEBI" id="CHEBI:15377"/>
        <dbReference type="ChEBI" id="CHEBI:15685"/>
        <dbReference type="ChEBI" id="CHEBI:16845"/>
        <dbReference type="ChEBI" id="CHEBI:57287"/>
        <dbReference type="ChEBI" id="CHEBI:57292"/>
        <dbReference type="EC" id="2.3.1.117"/>
    </reaction>
</comment>
<comment type="pathway">
    <text evidence="1">Amino-acid biosynthesis; L-lysine biosynthesis via DAP pathway; LL-2,6-diaminopimelate from (S)-tetrahydrodipicolinate (succinylase route): step 1/3.</text>
</comment>
<comment type="subcellular location">
    <subcellularLocation>
        <location evidence="1">Cytoplasm</location>
    </subcellularLocation>
</comment>
<comment type="similarity">
    <text evidence="1">Belongs to the transferase hexapeptide repeat family.</text>
</comment>
<gene>
    <name evidence="1" type="primary">dapD</name>
    <name type="ordered locus">SeAg_B0252</name>
</gene>
<accession>B5F8S7</accession>
<reference key="1">
    <citation type="journal article" date="2011" name="J. Bacteriol.">
        <title>Comparative genomics of 28 Salmonella enterica isolates: evidence for CRISPR-mediated adaptive sublineage evolution.</title>
        <authorList>
            <person name="Fricke W.F."/>
            <person name="Mammel M.K."/>
            <person name="McDermott P.F."/>
            <person name="Tartera C."/>
            <person name="White D.G."/>
            <person name="Leclerc J.E."/>
            <person name="Ravel J."/>
            <person name="Cebula T.A."/>
        </authorList>
    </citation>
    <scope>NUCLEOTIDE SEQUENCE [LARGE SCALE GENOMIC DNA]</scope>
    <source>
        <strain>SL483</strain>
    </source>
</reference>
<keyword id="KW-0012">Acyltransferase</keyword>
<keyword id="KW-0028">Amino-acid biosynthesis</keyword>
<keyword id="KW-0963">Cytoplasm</keyword>
<keyword id="KW-0220">Diaminopimelate biosynthesis</keyword>
<keyword id="KW-0457">Lysine biosynthesis</keyword>
<keyword id="KW-0677">Repeat</keyword>
<keyword id="KW-0808">Transferase</keyword>
<protein>
    <recommendedName>
        <fullName evidence="1">2,3,4,5-tetrahydropyridine-2,6-dicarboxylate N-succinyltransferase</fullName>
        <ecNumber evidence="1">2.3.1.117</ecNumber>
    </recommendedName>
    <alternativeName>
        <fullName evidence="1">Tetrahydrodipicolinate N-succinyltransferase</fullName>
        <shortName evidence="1">THP succinyltransferase</shortName>
        <shortName evidence="1">Tetrahydropicolinate succinylase</shortName>
    </alternativeName>
</protein>
<organism>
    <name type="scientific">Salmonella agona (strain SL483)</name>
    <dbReference type="NCBI Taxonomy" id="454166"/>
    <lineage>
        <taxon>Bacteria</taxon>
        <taxon>Pseudomonadati</taxon>
        <taxon>Pseudomonadota</taxon>
        <taxon>Gammaproteobacteria</taxon>
        <taxon>Enterobacterales</taxon>
        <taxon>Enterobacteriaceae</taxon>
        <taxon>Salmonella</taxon>
    </lineage>
</organism>
<feature type="chain" id="PRO_1000134063" description="2,3,4,5-tetrahydropyridine-2,6-dicarboxylate N-succinyltransferase">
    <location>
        <begin position="1"/>
        <end position="274"/>
    </location>
</feature>
<proteinExistence type="inferred from homology"/>
<evidence type="ECO:0000255" key="1">
    <source>
        <dbReference type="HAMAP-Rule" id="MF_00811"/>
    </source>
</evidence>
<name>DAPD_SALA4</name>